<protein>
    <recommendedName>
        <fullName evidence="2">RNA-directed RNA polymerase catalytic subunit</fullName>
        <ecNumber evidence="2">2.7.7.48</ecNumber>
    </recommendedName>
    <alternativeName>
        <fullName evidence="2">Polymerase basic protein 1</fullName>
        <shortName evidence="2">PB1</shortName>
    </alternativeName>
    <alternativeName>
        <fullName evidence="2">RNA-directed RNA polymerase subunit P1</fullName>
    </alternativeName>
</protein>
<feature type="chain" id="PRO_0000310574" description="RNA-directed RNA polymerase catalytic subunit">
    <location>
        <begin position="1"/>
        <end position="757"/>
    </location>
</feature>
<feature type="domain" description="RdRp catalytic" evidence="2">
    <location>
        <begin position="286"/>
        <end position="483"/>
    </location>
</feature>
<feature type="region of interest" description="Disordered" evidence="3">
    <location>
        <begin position="53"/>
        <end position="82"/>
    </location>
</feature>
<feature type="region of interest" description="Promoter-binding site" evidence="2">
    <location>
        <begin position="249"/>
        <end position="256"/>
    </location>
</feature>
<feature type="short sequence motif" description="Nuclear localization signal" evidence="2">
    <location>
        <begin position="187"/>
        <end position="195"/>
    </location>
</feature>
<feature type="short sequence motif" description="Nuclear localization signal" evidence="2">
    <location>
        <begin position="203"/>
        <end position="216"/>
    </location>
</feature>
<feature type="compositionally biased region" description="Polar residues" evidence="3">
    <location>
        <begin position="55"/>
        <end position="64"/>
    </location>
</feature>
<feature type="helix" evidence="5">
    <location>
        <begin position="5"/>
        <end position="10"/>
    </location>
</feature>
<feature type="helix" evidence="5">
    <location>
        <begin position="15"/>
        <end position="21"/>
    </location>
</feature>
<feature type="helix" evidence="5">
    <location>
        <begin position="36"/>
        <end position="48"/>
    </location>
</feature>
<feature type="turn" evidence="5">
    <location>
        <begin position="49"/>
        <end position="52"/>
    </location>
</feature>
<feature type="strand" evidence="5">
    <location>
        <begin position="53"/>
        <end position="57"/>
    </location>
</feature>
<feature type="turn" evidence="5">
    <location>
        <begin position="59"/>
        <end position="61"/>
    </location>
</feature>
<feature type="strand" evidence="5">
    <location>
        <begin position="64"/>
        <end position="67"/>
    </location>
</feature>
<feature type="strand" evidence="5">
    <location>
        <begin position="75"/>
        <end position="78"/>
    </location>
</feature>
<feature type="helix" evidence="5">
    <location>
        <begin position="85"/>
        <end position="98"/>
    </location>
</feature>
<feature type="helix" evidence="5">
    <location>
        <begin position="102"/>
        <end position="116"/>
    </location>
</feature>
<feature type="helix" evidence="5">
    <location>
        <begin position="119"/>
        <end position="123"/>
    </location>
</feature>
<feature type="strand" evidence="4">
    <location>
        <begin position="124"/>
        <end position="126"/>
    </location>
</feature>
<feature type="strand" evidence="5">
    <location>
        <begin position="128"/>
        <end position="130"/>
    </location>
</feature>
<feature type="turn" evidence="5">
    <location>
        <begin position="131"/>
        <end position="134"/>
    </location>
</feature>
<feature type="strand" evidence="5">
    <location>
        <begin position="135"/>
        <end position="137"/>
    </location>
</feature>
<feature type="helix" evidence="5">
    <location>
        <begin position="139"/>
        <end position="153"/>
    </location>
</feature>
<feature type="helix" evidence="5">
    <location>
        <begin position="157"/>
        <end position="160"/>
    </location>
</feature>
<feature type="helix" evidence="5">
    <location>
        <begin position="163"/>
        <end position="174"/>
    </location>
</feature>
<feature type="strand" evidence="5">
    <location>
        <begin position="177"/>
        <end position="184"/>
    </location>
</feature>
<feature type="strand" evidence="5">
    <location>
        <begin position="207"/>
        <end position="213"/>
    </location>
</feature>
<feature type="helix" evidence="5">
    <location>
        <begin position="214"/>
        <end position="221"/>
    </location>
</feature>
<feature type="strand" evidence="5">
    <location>
        <begin position="222"/>
        <end position="228"/>
    </location>
</feature>
<feature type="strand" evidence="5">
    <location>
        <begin position="240"/>
        <end position="243"/>
    </location>
</feature>
<feature type="strand" evidence="7">
    <location>
        <begin position="246"/>
        <end position="248"/>
    </location>
</feature>
<feature type="helix" evidence="5">
    <location>
        <begin position="249"/>
        <end position="264"/>
    </location>
</feature>
<feature type="strand" evidence="4">
    <location>
        <begin position="271"/>
        <end position="273"/>
    </location>
</feature>
<feature type="helix" evidence="5">
    <location>
        <begin position="275"/>
        <end position="289"/>
    </location>
</feature>
<feature type="turn" evidence="5">
    <location>
        <begin position="290"/>
        <end position="292"/>
    </location>
</feature>
<feature type="strand" evidence="5">
    <location>
        <begin position="298"/>
        <end position="304"/>
    </location>
</feature>
<feature type="turn" evidence="5">
    <location>
        <begin position="307"/>
        <end position="309"/>
    </location>
</feature>
<feature type="helix" evidence="5">
    <location>
        <begin position="310"/>
        <end position="312"/>
    </location>
</feature>
<feature type="helix" evidence="5">
    <location>
        <begin position="315"/>
        <end position="325"/>
    </location>
</feature>
<feature type="turn" evidence="5">
    <location>
        <begin position="326"/>
        <end position="328"/>
    </location>
</feature>
<feature type="helix" evidence="5">
    <location>
        <begin position="331"/>
        <end position="345"/>
    </location>
</feature>
<feature type="strand" evidence="5">
    <location>
        <begin position="348"/>
        <end position="350"/>
    </location>
</feature>
<feature type="strand" evidence="5">
    <location>
        <begin position="355"/>
        <end position="359"/>
    </location>
</feature>
<feature type="turn" evidence="5">
    <location>
        <begin position="360"/>
        <end position="363"/>
    </location>
</feature>
<feature type="strand" evidence="5">
    <location>
        <begin position="364"/>
        <end position="368"/>
    </location>
</feature>
<feature type="helix" evidence="5">
    <location>
        <begin position="370"/>
        <end position="372"/>
    </location>
</feature>
<feature type="turn" evidence="5">
    <location>
        <begin position="373"/>
        <end position="375"/>
    </location>
</feature>
<feature type="helix" evidence="5">
    <location>
        <begin position="378"/>
        <end position="380"/>
    </location>
</feature>
<feature type="helix" evidence="5">
    <location>
        <begin position="383"/>
        <end position="392"/>
    </location>
</feature>
<feature type="helix" evidence="5">
    <location>
        <begin position="393"/>
        <end position="395"/>
    </location>
</feature>
<feature type="strand" evidence="5">
    <location>
        <begin position="400"/>
        <end position="402"/>
    </location>
</feature>
<feature type="strand" evidence="4">
    <location>
        <begin position="408"/>
        <end position="410"/>
    </location>
</feature>
<feature type="helix" evidence="5">
    <location>
        <begin position="413"/>
        <end position="425"/>
    </location>
</feature>
<feature type="turn" evidence="5">
    <location>
        <begin position="430"/>
        <end position="432"/>
    </location>
</feature>
<feature type="strand" evidence="5">
    <location>
        <begin position="437"/>
        <end position="443"/>
    </location>
</feature>
<feature type="strand" evidence="5">
    <location>
        <begin position="446"/>
        <end position="455"/>
    </location>
</feature>
<feature type="helix" evidence="5">
    <location>
        <begin position="456"/>
        <end position="471"/>
    </location>
</feature>
<feature type="turn" evidence="5">
    <location>
        <begin position="472"/>
        <end position="474"/>
    </location>
</feature>
<feature type="strand" evidence="5">
    <location>
        <begin position="479"/>
        <end position="481"/>
    </location>
</feature>
<feature type="strand" evidence="5">
    <location>
        <begin position="483"/>
        <end position="486"/>
    </location>
</feature>
<feature type="strand" evidence="5">
    <location>
        <begin position="489"/>
        <end position="492"/>
    </location>
</feature>
<feature type="strand" evidence="5">
    <location>
        <begin position="495"/>
        <end position="501"/>
    </location>
</feature>
<feature type="helix" evidence="5">
    <location>
        <begin position="505"/>
        <end position="511"/>
    </location>
</feature>
<feature type="helix" evidence="5">
    <location>
        <begin position="519"/>
        <end position="535"/>
    </location>
</feature>
<feature type="helix" evidence="5">
    <location>
        <begin position="541"/>
        <end position="559"/>
    </location>
</feature>
<feature type="strand" evidence="5">
    <location>
        <begin position="564"/>
        <end position="566"/>
    </location>
</feature>
<feature type="helix" evidence="5">
    <location>
        <begin position="573"/>
        <end position="582"/>
    </location>
</feature>
<feature type="helix" evidence="5">
    <location>
        <begin position="586"/>
        <end position="588"/>
    </location>
</feature>
<feature type="helix" evidence="5">
    <location>
        <begin position="591"/>
        <end position="593"/>
    </location>
</feature>
<feature type="helix" evidence="4">
    <location>
        <begin position="601"/>
        <end position="603"/>
    </location>
</feature>
<feature type="helix" evidence="5">
    <location>
        <begin position="608"/>
        <end position="611"/>
    </location>
</feature>
<feature type="helix" evidence="5">
    <location>
        <begin position="613"/>
        <end position="615"/>
    </location>
</feature>
<feature type="helix" evidence="5">
    <location>
        <begin position="618"/>
        <end position="624"/>
    </location>
</feature>
<feature type="strand" evidence="6">
    <location>
        <begin position="630"/>
        <end position="632"/>
    </location>
</feature>
<feature type="helix" evidence="6">
    <location>
        <begin position="637"/>
        <end position="639"/>
    </location>
</feature>
<feature type="strand" evidence="4">
    <location>
        <begin position="640"/>
        <end position="645"/>
    </location>
</feature>
<feature type="strand" evidence="4">
    <location>
        <begin position="653"/>
        <end position="656"/>
    </location>
</feature>
<feature type="helix" evidence="7">
    <location>
        <begin position="663"/>
        <end position="665"/>
    </location>
</feature>
<feature type="helix" evidence="5">
    <location>
        <begin position="673"/>
        <end position="676"/>
    </location>
</feature>
<feature type="turn" evidence="5">
    <location>
        <begin position="679"/>
        <end position="681"/>
    </location>
</feature>
<feature type="helix" evidence="5">
    <location>
        <begin position="682"/>
        <end position="699"/>
    </location>
</feature>
<feature type="helix" evidence="5">
    <location>
        <begin position="701"/>
        <end position="703"/>
    </location>
</feature>
<feature type="strand" evidence="5">
    <location>
        <begin position="711"/>
        <end position="713"/>
    </location>
</feature>
<feature type="helix" evidence="5">
    <location>
        <begin position="714"/>
        <end position="731"/>
    </location>
</feature>
<feature type="strand" evidence="5">
    <location>
        <begin position="732"/>
        <end position="734"/>
    </location>
</feature>
<feature type="helix" evidence="5">
    <location>
        <begin position="737"/>
        <end position="755"/>
    </location>
</feature>
<organism>
    <name type="scientific">Influenza A virus (strain A/Brevig Mission/1/1918 H1N1)</name>
    <name type="common">Influenza A virus (strain A/South Carolina/1/1918 H1N1)</name>
    <dbReference type="NCBI Taxonomy" id="88776"/>
    <lineage>
        <taxon>Viruses</taxon>
        <taxon>Riboviria</taxon>
        <taxon>Orthornavirae</taxon>
        <taxon>Negarnaviricota</taxon>
        <taxon>Polyploviricotina</taxon>
        <taxon>Insthoviricetes</taxon>
        <taxon>Articulavirales</taxon>
        <taxon>Orthomyxoviridae</taxon>
        <taxon>Alphainfluenzavirus</taxon>
        <taxon>Alphainfluenzavirus influenzae</taxon>
        <taxon>Influenza A virus</taxon>
    </lineage>
</organism>
<evidence type="ECO:0000250" key="1">
    <source>
        <dbReference type="UniProtKB" id="P03431"/>
    </source>
</evidence>
<evidence type="ECO:0000255" key="2">
    <source>
        <dbReference type="HAMAP-Rule" id="MF_04065"/>
    </source>
</evidence>
<evidence type="ECO:0000256" key="3">
    <source>
        <dbReference type="SAM" id="MobiDB-lite"/>
    </source>
</evidence>
<evidence type="ECO:0007829" key="4">
    <source>
        <dbReference type="PDB" id="7NHA"/>
    </source>
</evidence>
<evidence type="ECO:0007829" key="5">
    <source>
        <dbReference type="PDB" id="7NHC"/>
    </source>
</evidence>
<evidence type="ECO:0007829" key="6">
    <source>
        <dbReference type="PDB" id="7NHX"/>
    </source>
</evidence>
<evidence type="ECO:0007829" key="7">
    <source>
        <dbReference type="PDB" id="8R60"/>
    </source>
</evidence>
<sequence length="757" mass="86513">MDVNPTLLFLKVPAQNAISTTFPYTGDPPYSHGTGTGYTMDTVNRTHQYSEKGRWTTNTETGAPQLNPIDGPLPEDNEPSGYAQTDCVLEAMAFLEESHPGIFENSCLETMEVVQQTRVDKLTQGRQTYDWTLNRNQPAATALANTIEVFRSNGLTANESGRLIDFLKDVMESMDKEEMEITTHFQRKRRVRDNMTKKMVTQRTIGKKKQRLNKRSYLIRALTLNTMTKDAERGKLKRRAIATPGMQIRGFVYFVETLARSICEKLEQSGLPVGGNEKKAKLANVVRKMMTNSQDTELSFTITGDNTKWNENQNPRMFLAMITYITRNQPEWFRNVLSIAPIMFSNKMARLGKGYMFESKSMKLRTQIPAEMLASIDLKYFNDSTRKKIEKIRPLLIDGTASLSPGMMMGMFNMLSTVLGVSILNLGQKRYTKTTYWWDGLQSSDDFALIVNAPNHEGIQAGVDRFYRTCKLLGINMSKKKSYINRTGTFEFTSFFYRYGFVANFSMELPSFGVSGINESADMSIGVTVIKNNMINNDLGPATAQMALQLFIKDYRYTYRCHRGDTQIQTRRSFEIKKLWEQTRSKAGLLVSDGGPNLYNIRNLHIPEVCLKWELMDEDYQGRLCNPLNPFVSHKEIESVNNAVMMPAHGPAKNMEYDAVATTHSWIPKRNRSILNTSQRGILEDEQMYQKCCNLFEKFFPSSSYRRPVGISSMVEAMVSRARIDARIDFESGRIKKEEFAEIMKICSTIEELRRQK</sequence>
<comment type="function">
    <text evidence="2">RNA-dependent RNA polymerase which is responsible for replication and transcription of virus RNA segments. The transcription of viral mRNAs occurs by a unique mechanism called cap-snatching. 5' methylated caps of cellular mRNAs are cleaved after 10-13 nucleotides by PA. In turn, these short capped RNAs are used as primers by PB1 for transcription of viral mRNAs. During virus replication, PB1 initiates RNA synthesis and copy vRNA into complementary RNA (cRNA) which in turn serves as a template for the production of more vRNAs.</text>
</comment>
<comment type="catalytic activity">
    <reaction evidence="2">
        <text>RNA(n) + a ribonucleoside 5'-triphosphate = RNA(n+1) + diphosphate</text>
        <dbReference type="Rhea" id="RHEA:21248"/>
        <dbReference type="Rhea" id="RHEA-COMP:14527"/>
        <dbReference type="Rhea" id="RHEA-COMP:17342"/>
        <dbReference type="ChEBI" id="CHEBI:33019"/>
        <dbReference type="ChEBI" id="CHEBI:61557"/>
        <dbReference type="ChEBI" id="CHEBI:140395"/>
        <dbReference type="EC" id="2.7.7.48"/>
    </reaction>
</comment>
<comment type="subunit">
    <text evidence="1 2">Influenza RNA polymerase is composed of three subunits: PB1, PB2 and PA. Interacts (via N-terminus) with PA (via C-terminus). Interacts (via C-terminus) with PB2 (via N-terminus); this interaction is essential for transcription initiation. Interacts (via C-terminus) with human PKP2 (via N-terminus); the interaction competitively inhibits the interaction between the RNA polymerase subunits PB1 and PB2 (By similarity).</text>
</comment>
<comment type="subcellular location">
    <subcellularLocation>
        <location evidence="2">Host nucleus</location>
    </subcellularLocation>
    <subcellularLocation>
        <location evidence="2">Host cytoplasm</location>
    </subcellularLocation>
</comment>
<comment type="PTM">
    <text evidence="2">Phosphorylated by host PRKCA.</text>
</comment>
<comment type="miscellaneous">
    <text>South Carolina isolate has been sequenced from formalid fixed-lung tissues of a 21-year-old male which died in 1918 at Ft. Jackson, SC. Brevig Mission isolate has been sequenced from lung tissues of an Inuit woman buried in the permafrost in a gravesite near Brevig Mission, Alaska. This sample was recovered by John Hultin, retired pathologist.</text>
</comment>
<comment type="similarity">
    <text evidence="2">Belongs to the influenza viruses polymerase PB1 family.</text>
</comment>
<dbReference type="EC" id="2.7.7.48" evidence="2"/>
<dbReference type="EMBL" id="DQ208310">
    <property type="protein sequence ID" value="ABA55039.1"/>
    <property type="molecule type" value="mRNA"/>
</dbReference>
<dbReference type="PDB" id="7NHA">
    <property type="method" value="EM"/>
    <property type="resolution" value="2.91 A"/>
    <property type="chains" value="B=1-757"/>
</dbReference>
<dbReference type="PDB" id="7NHC">
    <property type="method" value="EM"/>
    <property type="resolution" value="2.87 A"/>
    <property type="chains" value="B=1-757"/>
</dbReference>
<dbReference type="PDB" id="7NHX">
    <property type="method" value="EM"/>
    <property type="resolution" value="3.23 A"/>
    <property type="chains" value="B=1-757"/>
</dbReference>
<dbReference type="PDB" id="7NI0">
    <property type="method" value="EM"/>
    <property type="resolution" value="3.32 A"/>
    <property type="chains" value="B=1-757"/>
</dbReference>
<dbReference type="PDB" id="7NIK">
    <property type="method" value="EM"/>
    <property type="resolution" value="6.20 A"/>
    <property type="chains" value="B=1-757"/>
</dbReference>
<dbReference type="PDB" id="7NIL">
    <property type="method" value="EM"/>
    <property type="resolution" value="5.01 A"/>
    <property type="chains" value="B=1-757"/>
</dbReference>
<dbReference type="PDB" id="7NIR">
    <property type="method" value="EM"/>
    <property type="resolution" value="6.70 A"/>
    <property type="chains" value="B=1-757"/>
</dbReference>
<dbReference type="PDB" id="7NIS">
    <property type="method" value="EM"/>
    <property type="resolution" value="5.96 A"/>
    <property type="chains" value="B=1-757"/>
</dbReference>
<dbReference type="PDB" id="7NJ3">
    <property type="method" value="EM"/>
    <property type="resolution" value="4.48 A"/>
    <property type="chains" value="B=1-757"/>
</dbReference>
<dbReference type="PDB" id="7NJ4">
    <property type="method" value="EM"/>
    <property type="resolution" value="5.84 A"/>
    <property type="chains" value="B=1-757"/>
</dbReference>
<dbReference type="PDB" id="7NJ5">
    <property type="method" value="EM"/>
    <property type="resolution" value="4.63 A"/>
    <property type="chains" value="B=1-757"/>
</dbReference>
<dbReference type="PDB" id="7NJ7">
    <property type="method" value="EM"/>
    <property type="resolution" value="4.82 A"/>
    <property type="chains" value="B=1-757"/>
</dbReference>
<dbReference type="PDB" id="7NK1">
    <property type="method" value="EM"/>
    <property type="resolution" value="4.22 A"/>
    <property type="chains" value="B=1-757"/>
</dbReference>
<dbReference type="PDB" id="7NK2">
    <property type="method" value="EM"/>
    <property type="resolution" value="4.84 A"/>
    <property type="chains" value="B=1-757"/>
</dbReference>
<dbReference type="PDB" id="7NK4">
    <property type="method" value="EM"/>
    <property type="resolution" value="5.32 A"/>
    <property type="chains" value="B=1-757"/>
</dbReference>
<dbReference type="PDB" id="7NK6">
    <property type="method" value="EM"/>
    <property type="resolution" value="6.72 A"/>
    <property type="chains" value="B=1-757"/>
</dbReference>
<dbReference type="PDB" id="7NK8">
    <property type="method" value="EM"/>
    <property type="resolution" value="5.34 A"/>
    <property type="chains" value="B=1-757"/>
</dbReference>
<dbReference type="PDB" id="7NKA">
    <property type="method" value="EM"/>
    <property type="resolution" value="4.07 A"/>
    <property type="chains" value="B=1-757"/>
</dbReference>
<dbReference type="PDB" id="7NKC">
    <property type="method" value="EM"/>
    <property type="resolution" value="4.46 A"/>
    <property type="chains" value="B=1-757"/>
</dbReference>
<dbReference type="PDB" id="7NKI">
    <property type="method" value="EM"/>
    <property type="resolution" value="4.67 A"/>
    <property type="chains" value="B=1-757"/>
</dbReference>
<dbReference type="PDB" id="7NKR">
    <property type="method" value="EM"/>
    <property type="resolution" value="5.60 A"/>
    <property type="chains" value="B=1-757"/>
</dbReference>
<dbReference type="PDB" id="8R60">
    <property type="method" value="EM"/>
    <property type="resolution" value="3.23 A"/>
    <property type="chains" value="B=1-757"/>
</dbReference>
<dbReference type="PDB" id="8R65">
    <property type="method" value="EM"/>
    <property type="resolution" value="4.23 A"/>
    <property type="chains" value="B=1-757"/>
</dbReference>
<dbReference type="PDBsum" id="7NHA"/>
<dbReference type="PDBsum" id="7NHC"/>
<dbReference type="PDBsum" id="7NHX"/>
<dbReference type="PDBsum" id="7NI0"/>
<dbReference type="PDBsum" id="7NIK"/>
<dbReference type="PDBsum" id="7NIL"/>
<dbReference type="PDBsum" id="7NIR"/>
<dbReference type="PDBsum" id="7NIS"/>
<dbReference type="PDBsum" id="7NJ3"/>
<dbReference type="PDBsum" id="7NJ4"/>
<dbReference type="PDBsum" id="7NJ5"/>
<dbReference type="PDBsum" id="7NJ7"/>
<dbReference type="PDBsum" id="7NK1"/>
<dbReference type="PDBsum" id="7NK2"/>
<dbReference type="PDBsum" id="7NK4"/>
<dbReference type="PDBsum" id="7NK6"/>
<dbReference type="PDBsum" id="7NK8"/>
<dbReference type="PDBsum" id="7NKA"/>
<dbReference type="PDBsum" id="7NKC"/>
<dbReference type="PDBsum" id="7NKI"/>
<dbReference type="PDBsum" id="7NKR"/>
<dbReference type="PDBsum" id="8R60"/>
<dbReference type="PDBsum" id="8R65"/>
<dbReference type="EMDB" id="EMD-12322"/>
<dbReference type="EMDB" id="EMD-12323"/>
<dbReference type="EMDB" id="EMD-12342"/>
<dbReference type="EMDB" id="EMD-12348"/>
<dbReference type="EMDB" id="EMD-12361"/>
<dbReference type="EMDB" id="EMD-12362"/>
<dbReference type="EMDB" id="EMD-12363"/>
<dbReference type="EMDB" id="EMD-12364"/>
<dbReference type="EMDB" id="EMD-12371"/>
<dbReference type="EMDB" id="EMD-12372"/>
<dbReference type="EMDB" id="EMD-12373"/>
<dbReference type="EMDB" id="EMD-12375"/>
<dbReference type="EMDB" id="EMD-12428"/>
<dbReference type="EMDB" id="EMD-12429"/>
<dbReference type="EMDB" id="EMD-12430"/>
<dbReference type="EMDB" id="EMD-12431"/>
<dbReference type="EMDB" id="EMD-12433"/>
<dbReference type="EMDB" id="EMD-12435"/>
<dbReference type="EMDB" id="EMD-12437"/>
<dbReference type="EMDB" id="EMD-12440"/>
<dbReference type="EMDB" id="EMD-12447"/>
<dbReference type="EMDB" id="EMD-18945"/>
<dbReference type="EMDB" id="EMD-18947"/>
<dbReference type="SMR" id="Q3HM40"/>
<dbReference type="Proteomes" id="UP000008430">
    <property type="component" value="Genome"/>
</dbReference>
<dbReference type="GO" id="GO:0030430">
    <property type="term" value="C:host cell cytoplasm"/>
    <property type="evidence" value="ECO:0007669"/>
    <property type="project" value="UniProtKB-SubCell"/>
</dbReference>
<dbReference type="GO" id="GO:0042025">
    <property type="term" value="C:host cell nucleus"/>
    <property type="evidence" value="ECO:0007669"/>
    <property type="project" value="UniProtKB-SubCell"/>
</dbReference>
<dbReference type="GO" id="GO:0000166">
    <property type="term" value="F:nucleotide binding"/>
    <property type="evidence" value="ECO:0007669"/>
    <property type="project" value="UniProtKB-UniRule"/>
</dbReference>
<dbReference type="GO" id="GO:0003723">
    <property type="term" value="F:RNA binding"/>
    <property type="evidence" value="ECO:0007669"/>
    <property type="project" value="InterPro"/>
</dbReference>
<dbReference type="GO" id="GO:0003968">
    <property type="term" value="F:RNA-directed RNA polymerase activity"/>
    <property type="evidence" value="ECO:0007669"/>
    <property type="project" value="UniProtKB-UniRule"/>
</dbReference>
<dbReference type="GO" id="GO:0006351">
    <property type="term" value="P:DNA-templated transcription"/>
    <property type="evidence" value="ECO:0007669"/>
    <property type="project" value="UniProtKB-UniRule"/>
</dbReference>
<dbReference type="GO" id="GO:0039657">
    <property type="term" value="P:symbiont-mediated suppression of host gene expression"/>
    <property type="evidence" value="ECO:0007669"/>
    <property type="project" value="UniProtKB-KW"/>
</dbReference>
<dbReference type="GO" id="GO:0039523">
    <property type="term" value="P:symbiont-mediated suppression of host mRNA transcription via inhibition of RNA polymerase II activity"/>
    <property type="evidence" value="ECO:0007669"/>
    <property type="project" value="UniProtKB-UniRule"/>
</dbReference>
<dbReference type="GO" id="GO:0039694">
    <property type="term" value="P:viral RNA genome replication"/>
    <property type="evidence" value="ECO:0007669"/>
    <property type="project" value="UniProtKB-UniRule"/>
</dbReference>
<dbReference type="GO" id="GO:0019083">
    <property type="term" value="P:viral transcription"/>
    <property type="evidence" value="ECO:0007669"/>
    <property type="project" value="UniProtKB-KW"/>
</dbReference>
<dbReference type="Gene3D" id="6.10.140.720">
    <property type="match status" value="1"/>
</dbReference>
<dbReference type="HAMAP" id="MF_04065">
    <property type="entry name" value="INFV_RDRP"/>
    <property type="match status" value="1"/>
</dbReference>
<dbReference type="InterPro" id="IPR007099">
    <property type="entry name" value="RNA-dir_pol_NSvirus"/>
</dbReference>
<dbReference type="InterPro" id="IPR001407">
    <property type="entry name" value="RNA_pol_PB1_influenza"/>
</dbReference>
<dbReference type="Pfam" id="PF00602">
    <property type="entry name" value="Flu_PB1"/>
    <property type="match status" value="1"/>
</dbReference>
<dbReference type="PIRSF" id="PIRSF000827">
    <property type="entry name" value="RdRPol_OMV"/>
    <property type="match status" value="1"/>
</dbReference>
<dbReference type="PROSITE" id="PS50525">
    <property type="entry name" value="RDRP_SSRNA_NEG_SEG"/>
    <property type="match status" value="1"/>
</dbReference>
<keyword id="KW-0002">3D-structure</keyword>
<keyword id="KW-1262">Eukaryotic host gene expression shutoff by virus</keyword>
<keyword id="KW-1191">Eukaryotic host transcription shutoff by virus</keyword>
<keyword id="KW-1035">Host cytoplasm</keyword>
<keyword id="KW-1190">Host gene expression shutoff by virus</keyword>
<keyword id="KW-1048">Host nucleus</keyword>
<keyword id="KW-0945">Host-virus interaction</keyword>
<keyword id="KW-1104">Inhibition of host RNA polymerase II by virus</keyword>
<keyword id="KW-0547">Nucleotide-binding</keyword>
<keyword id="KW-0548">Nucleotidyltransferase</keyword>
<keyword id="KW-0597">Phosphoprotein</keyword>
<keyword id="KW-0696">RNA-directed RNA polymerase</keyword>
<keyword id="KW-0808">Transferase</keyword>
<keyword id="KW-0693">Viral RNA replication</keyword>
<keyword id="KW-1195">Viral transcription</keyword>
<gene>
    <name evidence="2" type="primary">PB1</name>
</gene>
<organismHost>
    <name type="scientific">Aves</name>
    <dbReference type="NCBI Taxonomy" id="8782"/>
</organismHost>
<organismHost>
    <name type="scientific">Homo sapiens</name>
    <name type="common">Human</name>
    <dbReference type="NCBI Taxonomy" id="9606"/>
</organismHost>
<organismHost>
    <name type="scientific">Sus scrofa</name>
    <name type="common">Pig</name>
    <dbReference type="NCBI Taxonomy" id="9823"/>
</organismHost>
<name>RDRP_I18A0</name>
<proteinExistence type="evidence at protein level"/>
<reference key="1">
    <citation type="journal article" date="2005" name="Nature">
        <title>Characterization of the 1918 influenza virus polymerase genes.</title>
        <authorList>
            <person name="Taubenberger J.K."/>
            <person name="Reid A.H."/>
            <person name="Lourens R.M."/>
            <person name="Wang R."/>
            <person name="Jin G."/>
            <person name="Fanning T.G."/>
        </authorList>
    </citation>
    <scope>NUCLEOTIDE SEQUENCE [MRNA]</scope>
</reference>
<accession>Q3HM40</accession>